<evidence type="ECO:0000250" key="1">
    <source>
        <dbReference type="UniProtKB" id="G2Q5N0"/>
    </source>
</evidence>
<evidence type="ECO:0000250" key="2">
    <source>
        <dbReference type="UniProtKB" id="O00623"/>
    </source>
</evidence>
<evidence type="ECO:0000250" key="3">
    <source>
        <dbReference type="UniProtKB" id="Q04370"/>
    </source>
</evidence>
<evidence type="ECO:0000255" key="4"/>
<evidence type="ECO:0000305" key="5"/>
<dbReference type="EMBL" id="BC114718">
    <property type="protein sequence ID" value="AAI14719.1"/>
    <property type="molecule type" value="mRNA"/>
</dbReference>
<dbReference type="RefSeq" id="XP_010796495.1">
    <property type="nucleotide sequence ID" value="XM_010798193.2"/>
</dbReference>
<dbReference type="RefSeq" id="XP_010814094.1">
    <property type="nucleotide sequence ID" value="XM_010815792.4"/>
</dbReference>
<dbReference type="SMR" id="A4FUD4"/>
<dbReference type="FunCoup" id="A4FUD4">
    <property type="interactions" value="2843"/>
</dbReference>
<dbReference type="STRING" id="9913.ENSBTAP00000026285"/>
<dbReference type="PaxDb" id="9913-ENSBTAP00000026285"/>
<dbReference type="Ensembl" id="ENSBTAT00000026285.5">
    <property type="protein sequence ID" value="ENSBTAP00000026285.4"/>
    <property type="gene ID" value="ENSBTAG00000019723.5"/>
</dbReference>
<dbReference type="GeneID" id="506007"/>
<dbReference type="KEGG" id="bta:506007"/>
<dbReference type="CTD" id="5193"/>
<dbReference type="VEuPathDB" id="HostDB:ENSBTAG00000019723"/>
<dbReference type="VGNC" id="VGNC:32754">
    <property type="gene designation" value="PEX12"/>
</dbReference>
<dbReference type="eggNOG" id="KOG0826">
    <property type="taxonomic scope" value="Eukaryota"/>
</dbReference>
<dbReference type="GeneTree" id="ENSGT00390000016209"/>
<dbReference type="HOGENOM" id="CLU_031067_1_0_1"/>
<dbReference type="InParanoid" id="A4FUD4"/>
<dbReference type="OMA" id="QHYLARC"/>
<dbReference type="OrthoDB" id="107372at2759"/>
<dbReference type="TreeFam" id="TF314511"/>
<dbReference type="Reactome" id="R-BTA-8866654">
    <property type="pathway name" value="E3 ubiquitin ligases ubiquitinate target proteins"/>
</dbReference>
<dbReference type="Reactome" id="R-BTA-9033241">
    <property type="pathway name" value="Peroxisomal protein import"/>
</dbReference>
<dbReference type="Reactome" id="R-BTA-9603798">
    <property type="pathway name" value="Class I peroxisomal membrane protein import"/>
</dbReference>
<dbReference type="UniPathway" id="UPA00143"/>
<dbReference type="Proteomes" id="UP000009136">
    <property type="component" value="Chromosome 19"/>
</dbReference>
<dbReference type="Bgee" id="ENSBTAG00000019723">
    <property type="expression patterns" value="Expressed in semen and 107 other cell types or tissues"/>
</dbReference>
<dbReference type="GO" id="GO:1990429">
    <property type="term" value="C:peroxisomal importomer complex"/>
    <property type="evidence" value="ECO:0000318"/>
    <property type="project" value="GO_Central"/>
</dbReference>
<dbReference type="GO" id="GO:0005778">
    <property type="term" value="C:peroxisomal membrane"/>
    <property type="evidence" value="ECO:0000318"/>
    <property type="project" value="GO_Central"/>
</dbReference>
<dbReference type="GO" id="GO:1990757">
    <property type="term" value="F:ubiquitin ligase activator activity"/>
    <property type="evidence" value="ECO:0007669"/>
    <property type="project" value="Ensembl"/>
</dbReference>
<dbReference type="GO" id="GO:0004842">
    <property type="term" value="F:ubiquitin-protein transferase activity"/>
    <property type="evidence" value="ECO:0000318"/>
    <property type="project" value="GO_Central"/>
</dbReference>
<dbReference type="GO" id="GO:0008270">
    <property type="term" value="F:zinc ion binding"/>
    <property type="evidence" value="ECO:0000250"/>
    <property type="project" value="UniProtKB"/>
</dbReference>
<dbReference type="GO" id="GO:0034614">
    <property type="term" value="P:cellular response to reactive oxygen species"/>
    <property type="evidence" value="ECO:0007669"/>
    <property type="project" value="Ensembl"/>
</dbReference>
<dbReference type="GO" id="GO:0007031">
    <property type="term" value="P:peroxisome organization"/>
    <property type="evidence" value="ECO:0000250"/>
    <property type="project" value="UniProtKB"/>
</dbReference>
<dbReference type="GO" id="GO:0016558">
    <property type="term" value="P:protein import into peroxisome matrix"/>
    <property type="evidence" value="ECO:0000318"/>
    <property type="project" value="GO_Central"/>
</dbReference>
<dbReference type="GO" id="GO:0016562">
    <property type="term" value="P:protein import into peroxisome matrix, receptor recycling"/>
    <property type="evidence" value="ECO:0007669"/>
    <property type="project" value="Ensembl"/>
</dbReference>
<dbReference type="GO" id="GO:0006513">
    <property type="term" value="P:protein monoubiquitination"/>
    <property type="evidence" value="ECO:0000318"/>
    <property type="project" value="GO_Central"/>
</dbReference>
<dbReference type="GO" id="GO:0000209">
    <property type="term" value="P:protein polyubiquitination"/>
    <property type="evidence" value="ECO:0007669"/>
    <property type="project" value="Ensembl"/>
</dbReference>
<dbReference type="CDD" id="cd16451">
    <property type="entry name" value="mRING_PEX12"/>
    <property type="match status" value="1"/>
</dbReference>
<dbReference type="FunFam" id="3.30.40.10:FF:000266">
    <property type="entry name" value="Peroxisome assembly protein 12"/>
    <property type="match status" value="1"/>
</dbReference>
<dbReference type="Gene3D" id="3.30.40.10">
    <property type="entry name" value="Zinc/RING finger domain, C3HC4 (zinc finger)"/>
    <property type="match status" value="1"/>
</dbReference>
<dbReference type="InterPro" id="IPR017375">
    <property type="entry name" value="PEX12"/>
</dbReference>
<dbReference type="InterPro" id="IPR006845">
    <property type="entry name" value="Pex_N"/>
</dbReference>
<dbReference type="InterPro" id="IPR013083">
    <property type="entry name" value="Znf_RING/FYVE/PHD"/>
</dbReference>
<dbReference type="PANTHER" id="PTHR12888:SF0">
    <property type="entry name" value="PEROXISOME ASSEMBLY PROTEIN 12"/>
    <property type="match status" value="1"/>
</dbReference>
<dbReference type="PANTHER" id="PTHR12888">
    <property type="entry name" value="PEROXISOME ASSEMBLY PROTEIN 12 PEROXIN-12"/>
    <property type="match status" value="1"/>
</dbReference>
<dbReference type="Pfam" id="PF04757">
    <property type="entry name" value="Pex2_Pex12"/>
    <property type="match status" value="1"/>
</dbReference>
<dbReference type="PIRSF" id="PIRSF038074">
    <property type="entry name" value="Peroxisome_assembly_p12"/>
    <property type="match status" value="1"/>
</dbReference>
<dbReference type="SUPFAM" id="SSF57850">
    <property type="entry name" value="RING/U-box"/>
    <property type="match status" value="1"/>
</dbReference>
<name>PEX12_BOVIN</name>
<reference key="1">
    <citation type="submission" date="2006-04" db="EMBL/GenBank/DDBJ databases">
        <authorList>
            <consortium name="NIH - Mammalian Gene Collection (MGC) project"/>
        </authorList>
    </citation>
    <scope>NUCLEOTIDE SEQUENCE [LARGE SCALE MRNA]</scope>
    <source>
        <strain>Hereford</strain>
        <tissue>Uterus</tissue>
    </source>
</reference>
<gene>
    <name type="primary">PEX12</name>
</gene>
<protein>
    <recommendedName>
        <fullName evidence="5">Peroxisome assembly protein 12</fullName>
    </recommendedName>
    <alternativeName>
        <fullName evidence="5">Peroxin-12</fullName>
    </alternativeName>
</protein>
<accession>A4FUD4</accession>
<keyword id="KW-0472">Membrane</keyword>
<keyword id="KW-0479">Metal-binding</keyword>
<keyword id="KW-0576">Peroxisome</keyword>
<keyword id="KW-0653">Protein transport</keyword>
<keyword id="KW-1185">Reference proteome</keyword>
<keyword id="KW-0812">Transmembrane</keyword>
<keyword id="KW-1133">Transmembrane helix</keyword>
<keyword id="KW-0813">Transport</keyword>
<keyword id="KW-0833">Ubl conjugation pathway</keyword>
<keyword id="KW-0862">Zinc</keyword>
<keyword id="KW-0863">Zinc-finger</keyword>
<organism>
    <name type="scientific">Bos taurus</name>
    <name type="common">Bovine</name>
    <dbReference type="NCBI Taxonomy" id="9913"/>
    <lineage>
        <taxon>Eukaryota</taxon>
        <taxon>Metazoa</taxon>
        <taxon>Chordata</taxon>
        <taxon>Craniata</taxon>
        <taxon>Vertebrata</taxon>
        <taxon>Euteleostomi</taxon>
        <taxon>Mammalia</taxon>
        <taxon>Eutheria</taxon>
        <taxon>Laurasiatheria</taxon>
        <taxon>Artiodactyla</taxon>
        <taxon>Ruminantia</taxon>
        <taxon>Pecora</taxon>
        <taxon>Bovidae</taxon>
        <taxon>Bovinae</taxon>
        <taxon>Bos</taxon>
    </lineage>
</organism>
<comment type="function">
    <text evidence="2 3">Component of a retrotranslocation channel required for peroxisome organization by mediating export of the PEX5 receptor from peroxisomes to the cytosol, thereby promoting PEX5 recycling (By similarity). The retrotranslocation channel is composed of PEX2, PEX10 and PEX12; each subunit contributing transmembrane segments that coassemble into an open channel that specifically allows the passage of PEX5 through the peroxisomal membrane (By similarity). PEX12 also regulates PEX5 recycling by activating the E3 ubiquitin-protein ligase activity of PEX10 (By similarity). When PEX5 recycling is compromised, PEX12 stimulates PEX10-mediated polyubiquitination of PEX5, leading to its subsequent degradation (By similarity).</text>
</comment>
<comment type="pathway">
    <text evidence="2">Protein modification; protein ubiquitination.</text>
</comment>
<comment type="subunit">
    <text evidence="2">Component of the PEX2-PEX10-PEX12 retrotranslocation channel, composed of PEX2, PEX10 and PEX12. Interacts with PEX19 via its cytoplasmic domain.</text>
</comment>
<comment type="subcellular location">
    <subcellularLocation>
        <location evidence="2">Peroxisome membrane</location>
        <topology evidence="4">Multi-pass membrane protein</topology>
    </subcellularLocation>
</comment>
<comment type="domain">
    <text evidence="1">The three subunits of the retrotranslocation channel (PEX2, PEX10 and PEX12) coassemble in the membrane into a channel with an open 10 Angstrom pore. The RING-type zinc-fingers that catalyze PEX5 receptor ubiquitination are positioned above the pore on the cytosolic side of the complex.</text>
</comment>
<comment type="domain">
    <text evidence="3">The RING-type zinc-finger is degenerated and only coordinates one zinc ions, preventing E3 ubiquitin-protein ligase activity.</text>
</comment>
<comment type="similarity">
    <text evidence="5">Belongs to the pex2/pex10/pex12 family.</text>
</comment>
<feature type="chain" id="PRO_0000356190" description="Peroxisome assembly protein 12">
    <location>
        <begin position="1"/>
        <end position="359"/>
    </location>
</feature>
<feature type="topological domain" description="Peroxisomal matrix" evidence="1">
    <location>
        <begin position="1"/>
        <end position="19"/>
    </location>
</feature>
<feature type="transmembrane region" description="Helical; Name=TM1" evidence="1">
    <location>
        <begin position="20"/>
        <end position="47"/>
    </location>
</feature>
<feature type="topological domain" description="Cytoplasmic" evidence="1">
    <location>
        <begin position="48"/>
        <end position="51"/>
    </location>
</feature>
<feature type="transmembrane region" description="Helical; Name=TM2" evidence="1">
    <location>
        <begin position="52"/>
        <end position="76"/>
    </location>
</feature>
<feature type="topological domain" description="Peroxisomal matrix" evidence="1">
    <location>
        <begin position="77"/>
        <end position="109"/>
    </location>
</feature>
<feature type="transmembrane region" description="Helical; Name=TM3" evidence="1">
    <location>
        <begin position="110"/>
        <end position="139"/>
    </location>
</feature>
<feature type="topological domain" description="Cytoplasmic" evidence="1">
    <location>
        <begin position="140"/>
        <end position="144"/>
    </location>
</feature>
<feature type="transmembrane region" description="Helical; Name=TM4" evidence="1">
    <location>
        <begin position="145"/>
        <end position="183"/>
    </location>
</feature>
<feature type="topological domain" description="Peroxisomal matrix" evidence="1">
    <location>
        <begin position="184"/>
        <end position="249"/>
    </location>
</feature>
<feature type="transmembrane region" description="Helical; Name=TM5" evidence="1">
    <location>
        <begin position="250"/>
        <end position="277"/>
    </location>
</feature>
<feature type="topological domain" description="Cytoplasmic" evidence="1">
    <location>
        <begin position="278"/>
        <end position="359"/>
    </location>
</feature>
<feature type="zinc finger region" description="RING-type; degenerate">
    <location>
        <begin position="304"/>
        <end position="343"/>
    </location>
</feature>
<feature type="binding site" evidence="1">
    <location>
        <position position="304"/>
    </location>
    <ligand>
        <name>Zn(2+)</name>
        <dbReference type="ChEBI" id="CHEBI:29105"/>
    </ligand>
</feature>
<feature type="binding site" evidence="1">
    <location>
        <position position="307"/>
    </location>
    <ligand>
        <name>Zn(2+)</name>
        <dbReference type="ChEBI" id="CHEBI:29105"/>
    </ligand>
</feature>
<feature type="binding site" evidence="1">
    <location>
        <position position="325"/>
    </location>
    <ligand>
        <name>Zn(2+)</name>
        <dbReference type="ChEBI" id="CHEBI:29105"/>
    </ligand>
</feature>
<feature type="binding site" evidence="1">
    <location>
        <position position="328"/>
    </location>
    <ligand>
        <name>Zn(2+)</name>
        <dbReference type="ChEBI" id="CHEBI:29105"/>
    </ligand>
</feature>
<sequence>MAEHGAHITTASVVDDQPSIFEVVAQDSLMSAVRPALQHVVKVLAESNPAHFGFFWRWFDEIFTLLDLLLQQHYLSKTSASFSENFYGLKRIVMGDQHKLQRLANAGLPKQQFMKSIMFLVLLPYLKVKLEKLVSSLREEDEYSIHPPSSRWKRFYRAFLAAYPFVNMAWEGWFLVQQLRYILGKAQHHSPLLRLAGVRLGRLTVQDIQALEHKPAEASMMQLPAGSIGEKIKSALKKAVGGVALSLSTGLSVGVFFLQFLEWWYSSENQETIKSLTALPTPPPPVHLDYNSDSPLLPKMKTVCPLCRKNRVNDTVLATSGYVFCYRCVFHYVRSHQACPITGYPTEVQHLIKLYSPEN</sequence>
<proteinExistence type="evidence at transcript level"/>